<name>FA47A_HUMAN</name>
<gene>
    <name type="primary">FAM47A</name>
</gene>
<proteinExistence type="evidence at protein level"/>
<protein>
    <recommendedName>
        <fullName>Protein FAM47A</fullName>
    </recommendedName>
</protein>
<organism>
    <name type="scientific">Homo sapiens</name>
    <name type="common">Human</name>
    <dbReference type="NCBI Taxonomy" id="9606"/>
    <lineage>
        <taxon>Eukaryota</taxon>
        <taxon>Metazoa</taxon>
        <taxon>Chordata</taxon>
        <taxon>Craniata</taxon>
        <taxon>Vertebrata</taxon>
        <taxon>Euteleostomi</taxon>
        <taxon>Mammalia</taxon>
        <taxon>Eutheria</taxon>
        <taxon>Euarchontoglires</taxon>
        <taxon>Primates</taxon>
        <taxon>Haplorrhini</taxon>
        <taxon>Catarrhini</taxon>
        <taxon>Hominidae</taxon>
        <taxon>Homo</taxon>
    </lineage>
</organism>
<comment type="interaction">
    <interactant intactId="EBI-34579660">
        <id>Q5JRC9</id>
    </interactant>
    <interactant intactId="EBI-713635">
        <id>O43639</id>
        <label>NCK2</label>
    </interactant>
    <organismsDiffer>false</organismsDiffer>
    <experiments>3</experiments>
</comment>
<comment type="polymorphism">
    <text evidence="4">The repeat encompassing Pro-495 to Glu-507 may be polymorphic.</text>
</comment>
<comment type="similarity">
    <text evidence="4">Belongs to the FAM47 family.</text>
</comment>
<sequence length="791" mass="90592">MGDQRLQDWLRSPGMDSKPWYCNKRPSKCFAKCKHRRLRFPPMDTQNWVFVKEGMDDFRYGCPSPEDTLVCRRDEFLLPKISLRGPQADPKSGQKKLLKKAALFSKLSPAQLARKAFVEQVEAQLMAKHPLAMYPNLGEDMPPDLLLQVLKHLDPERELEDAWACCETQEKTTEVPTEPGKHPCGEFCLKPPETPVSHLLPEPPETGVSHLSPEPPKTPVSSLRPEPPETGVSHLRPEPPETGVSHIRPGPPITRRRSSLLRQLLKLDSERKLEDARAPCEGREKTTDEPTEPGKYPCGKFCPRPFETPLSHLRQEPPKTPVSSLRPEPPETGESHLRLEHSKTRRGSSLRSEPSETGVSRLRLAPPKTRRGSSLHAEPSKTGVSHLSPEPPKTEVSHLHPVPPKTGVCHLRLEPPDTSQVSNLLLYILKVLDSGRTLKDVWDRCEARVKKTKEPTEPHKSPCGEPCLQPPETQVSHPHPEHPKTRRRSSLHSQPPKTRRTSSLRSEPPKTRRTSSLRSEPPKTRRTSSLGPEPPKTRRVSSLRPELPKSRRVSSLHPEPPKAPESHQFSEPPKIRASYIKELLQEDTPSTKECVSDSLQYRYTSEKLREFFKWAGDLGADEESIRNLFDFTPKYRATHEDQKFKKVKECSSELKYSMELDEKDEDKFFSQEKYWGRKFHTPSNSYTAQRVKMKYGAWYLKPKLWKKLRSDEPLIDPKLLLKKPDEPDVLDDLYGPIAFKDFILSKGYEMPGIIQRLFARRGWTYDSVKTPIQRAMIFYKYKEIVEASEED</sequence>
<feature type="chain" id="PRO_0000187037" description="Protein FAM47A">
    <location>
        <begin position="1"/>
        <end position="791"/>
    </location>
</feature>
<feature type="region of interest" description="Disordered" evidence="1">
    <location>
        <begin position="195"/>
        <end position="257"/>
    </location>
</feature>
<feature type="region of interest" description="Disordered" evidence="1">
    <location>
        <begin position="274"/>
        <end position="409"/>
    </location>
</feature>
<feature type="region of interest" description="Disordered" evidence="1">
    <location>
        <begin position="449"/>
        <end position="573"/>
    </location>
</feature>
<feature type="compositionally biased region" description="Basic and acidic residues" evidence="1">
    <location>
        <begin position="274"/>
        <end position="288"/>
    </location>
</feature>
<feature type="compositionally biased region" description="Basic and acidic residues" evidence="1">
    <location>
        <begin position="333"/>
        <end position="342"/>
    </location>
</feature>
<feature type="compositionally biased region" description="Polar residues" evidence="1">
    <location>
        <begin position="349"/>
        <end position="358"/>
    </location>
</feature>
<feature type="compositionally biased region" description="Basic and acidic residues" evidence="1">
    <location>
        <begin position="449"/>
        <end position="462"/>
    </location>
</feature>
<feature type="sequence variant" id="VAR_054412" description="In dbSNP:rs17856750." evidence="3">
    <original>F</original>
    <variation>L</variation>
    <location>
        <position position="50"/>
    </location>
</feature>
<feature type="sequence variant" id="VAR_054413" description="In dbSNP:rs17856751." evidence="3">
    <original>V</original>
    <variation>E</variation>
    <location>
        <position position="232"/>
    </location>
</feature>
<feature type="sequence variant" id="VAR_054414" description="In dbSNP:rs1811716.">
    <original>A</original>
    <variation>S</variation>
    <location>
        <position position="377"/>
    </location>
</feature>
<feature type="sequence variant" id="VAR_054415" evidence="2 3">
    <location>
        <begin position="495"/>
        <end position="507"/>
    </location>
</feature>
<feature type="sequence variant" id="VAR_054416" description="In dbSNP:rs5971820.">
    <original>G</original>
    <variation>R</variation>
    <location>
        <position position="531"/>
    </location>
</feature>
<keyword id="KW-1267">Proteomics identification</keyword>
<keyword id="KW-1185">Reference proteome</keyword>
<accession>Q5JRC9</accession>
<accession>A8K8I9</accession>
<accession>Q8TAA0</accession>
<dbReference type="EMBL" id="AK292354">
    <property type="protein sequence ID" value="BAF85043.1"/>
    <property type="molecule type" value="mRNA"/>
</dbReference>
<dbReference type="EMBL" id="AL591625">
    <property type="status" value="NOT_ANNOTATED_CDS"/>
    <property type="molecule type" value="Genomic_DNA"/>
</dbReference>
<dbReference type="EMBL" id="BC026171">
    <property type="protein sequence ID" value="AAH26171.1"/>
    <property type="molecule type" value="mRNA"/>
</dbReference>
<dbReference type="CCDS" id="CCDS43926.1"/>
<dbReference type="RefSeq" id="NP_981953.2">
    <property type="nucleotide sequence ID" value="NM_203408.4"/>
</dbReference>
<dbReference type="BioGRID" id="127700">
    <property type="interactions" value="2"/>
</dbReference>
<dbReference type="FunCoup" id="Q5JRC9">
    <property type="interactions" value="1"/>
</dbReference>
<dbReference type="IntAct" id="Q5JRC9">
    <property type="interactions" value="1"/>
</dbReference>
<dbReference type="STRING" id="9606.ENSP00000345029"/>
<dbReference type="GlyGen" id="Q5JRC9">
    <property type="glycosylation" value="1 site, 1 O-linked glycan (1 site)"/>
</dbReference>
<dbReference type="iPTMnet" id="Q5JRC9"/>
<dbReference type="PhosphoSitePlus" id="Q5JRC9"/>
<dbReference type="BioMuta" id="FAM47A"/>
<dbReference type="DMDM" id="223590225"/>
<dbReference type="jPOST" id="Q5JRC9"/>
<dbReference type="MassIVE" id="Q5JRC9"/>
<dbReference type="PaxDb" id="9606-ENSP00000345029"/>
<dbReference type="PeptideAtlas" id="Q5JRC9"/>
<dbReference type="ProteomicsDB" id="63084"/>
<dbReference type="Antibodypedia" id="435">
    <property type="antibodies" value="32 antibodies from 13 providers"/>
</dbReference>
<dbReference type="DNASU" id="158724"/>
<dbReference type="Ensembl" id="ENST00000346193.5">
    <property type="protein sequence ID" value="ENSP00000345029.3"/>
    <property type="gene ID" value="ENSG00000185448.12"/>
</dbReference>
<dbReference type="GeneID" id="158724"/>
<dbReference type="KEGG" id="hsa:158724"/>
<dbReference type="MANE-Select" id="ENST00000346193.5">
    <property type="protein sequence ID" value="ENSP00000345029.3"/>
    <property type="RefSeq nucleotide sequence ID" value="NM_203408.4"/>
    <property type="RefSeq protein sequence ID" value="NP_981953.2"/>
</dbReference>
<dbReference type="UCSC" id="uc004ddg.4">
    <property type="organism name" value="human"/>
</dbReference>
<dbReference type="AGR" id="HGNC:29962"/>
<dbReference type="CTD" id="158724"/>
<dbReference type="DisGeNET" id="158724"/>
<dbReference type="GeneCards" id="FAM47A"/>
<dbReference type="HGNC" id="HGNC:29962">
    <property type="gene designation" value="FAM47A"/>
</dbReference>
<dbReference type="HPA" id="ENSG00000185448">
    <property type="expression patterns" value="Tissue enriched (testis)"/>
</dbReference>
<dbReference type="neXtProt" id="NX_Q5JRC9"/>
<dbReference type="OpenTargets" id="ENSG00000185448"/>
<dbReference type="PharmGKB" id="PA134944222"/>
<dbReference type="VEuPathDB" id="HostDB:ENSG00000185448"/>
<dbReference type="eggNOG" id="ENOG502SEIG">
    <property type="taxonomic scope" value="Eukaryota"/>
</dbReference>
<dbReference type="GeneTree" id="ENSGT00940000163970"/>
<dbReference type="InParanoid" id="Q5JRC9"/>
<dbReference type="OMA" id="ICGRDEF"/>
<dbReference type="OrthoDB" id="9530753at2759"/>
<dbReference type="PAN-GO" id="Q5JRC9">
    <property type="GO annotations" value="0 GO annotations based on evolutionary models"/>
</dbReference>
<dbReference type="PhylomeDB" id="Q5JRC9"/>
<dbReference type="TreeFam" id="TF340932"/>
<dbReference type="PathwayCommons" id="Q5JRC9"/>
<dbReference type="BioGRID-ORCS" id="158724">
    <property type="hits" value="9 hits in 757 CRISPR screens"/>
</dbReference>
<dbReference type="GenomeRNAi" id="158724"/>
<dbReference type="Pharos" id="Q5JRC9">
    <property type="development level" value="Tdark"/>
</dbReference>
<dbReference type="PRO" id="PR:Q5JRC9"/>
<dbReference type="Proteomes" id="UP000005640">
    <property type="component" value="Chromosome X"/>
</dbReference>
<dbReference type="RNAct" id="Q5JRC9">
    <property type="molecule type" value="protein"/>
</dbReference>
<dbReference type="Bgee" id="ENSG00000185448">
    <property type="expression patterns" value="Expressed in sperm and 4 other cell types or tissues"/>
</dbReference>
<dbReference type="ExpressionAtlas" id="Q5JRC9">
    <property type="expression patterns" value="baseline and differential"/>
</dbReference>
<dbReference type="InterPro" id="IPR032743">
    <property type="entry name" value="FAM47"/>
</dbReference>
<dbReference type="PANTHER" id="PTHR47415">
    <property type="entry name" value="PROTEIN FAM47B"/>
    <property type="match status" value="1"/>
</dbReference>
<dbReference type="PANTHER" id="PTHR47415:SF1">
    <property type="entry name" value="PROTEIN FAM47B"/>
    <property type="match status" value="1"/>
</dbReference>
<dbReference type="Pfam" id="PF14642">
    <property type="entry name" value="FAM47"/>
    <property type="match status" value="5"/>
</dbReference>
<evidence type="ECO:0000256" key="1">
    <source>
        <dbReference type="SAM" id="MobiDB-lite"/>
    </source>
</evidence>
<evidence type="ECO:0000269" key="2">
    <source>
    </source>
</evidence>
<evidence type="ECO:0000269" key="3">
    <source>
    </source>
</evidence>
<evidence type="ECO:0000305" key="4"/>
<reference key="1">
    <citation type="journal article" date="2004" name="Nat. Genet.">
        <title>Complete sequencing and characterization of 21,243 full-length human cDNAs.</title>
        <authorList>
            <person name="Ota T."/>
            <person name="Suzuki Y."/>
            <person name="Nishikawa T."/>
            <person name="Otsuki T."/>
            <person name="Sugiyama T."/>
            <person name="Irie R."/>
            <person name="Wakamatsu A."/>
            <person name="Hayashi K."/>
            <person name="Sato H."/>
            <person name="Nagai K."/>
            <person name="Kimura K."/>
            <person name="Makita H."/>
            <person name="Sekine M."/>
            <person name="Obayashi M."/>
            <person name="Nishi T."/>
            <person name="Shibahara T."/>
            <person name="Tanaka T."/>
            <person name="Ishii S."/>
            <person name="Yamamoto J."/>
            <person name="Saito K."/>
            <person name="Kawai Y."/>
            <person name="Isono Y."/>
            <person name="Nakamura Y."/>
            <person name="Nagahari K."/>
            <person name="Murakami K."/>
            <person name="Yasuda T."/>
            <person name="Iwayanagi T."/>
            <person name="Wagatsuma M."/>
            <person name="Shiratori A."/>
            <person name="Sudo H."/>
            <person name="Hosoiri T."/>
            <person name="Kaku Y."/>
            <person name="Kodaira H."/>
            <person name="Kondo H."/>
            <person name="Sugawara M."/>
            <person name="Takahashi M."/>
            <person name="Kanda K."/>
            <person name="Yokoi T."/>
            <person name="Furuya T."/>
            <person name="Kikkawa E."/>
            <person name="Omura Y."/>
            <person name="Abe K."/>
            <person name="Kamihara K."/>
            <person name="Katsuta N."/>
            <person name="Sato K."/>
            <person name="Tanikawa M."/>
            <person name="Yamazaki M."/>
            <person name="Ninomiya K."/>
            <person name="Ishibashi T."/>
            <person name="Yamashita H."/>
            <person name="Murakawa K."/>
            <person name="Fujimori K."/>
            <person name="Tanai H."/>
            <person name="Kimata M."/>
            <person name="Watanabe M."/>
            <person name="Hiraoka S."/>
            <person name="Chiba Y."/>
            <person name="Ishida S."/>
            <person name="Ono Y."/>
            <person name="Takiguchi S."/>
            <person name="Watanabe S."/>
            <person name="Yosida M."/>
            <person name="Hotuta T."/>
            <person name="Kusano J."/>
            <person name="Kanehori K."/>
            <person name="Takahashi-Fujii A."/>
            <person name="Hara H."/>
            <person name="Tanase T.-O."/>
            <person name="Nomura Y."/>
            <person name="Togiya S."/>
            <person name="Komai F."/>
            <person name="Hara R."/>
            <person name="Takeuchi K."/>
            <person name="Arita M."/>
            <person name="Imose N."/>
            <person name="Musashino K."/>
            <person name="Yuuki H."/>
            <person name="Oshima A."/>
            <person name="Sasaki N."/>
            <person name="Aotsuka S."/>
            <person name="Yoshikawa Y."/>
            <person name="Matsunawa H."/>
            <person name="Ichihara T."/>
            <person name="Shiohata N."/>
            <person name="Sano S."/>
            <person name="Moriya S."/>
            <person name="Momiyama H."/>
            <person name="Satoh N."/>
            <person name="Takami S."/>
            <person name="Terashima Y."/>
            <person name="Suzuki O."/>
            <person name="Nakagawa S."/>
            <person name="Senoh A."/>
            <person name="Mizoguchi H."/>
            <person name="Goto Y."/>
            <person name="Shimizu F."/>
            <person name="Wakebe H."/>
            <person name="Hishigaki H."/>
            <person name="Watanabe T."/>
            <person name="Sugiyama A."/>
            <person name="Takemoto M."/>
            <person name="Kawakami B."/>
            <person name="Yamazaki M."/>
            <person name="Watanabe K."/>
            <person name="Kumagai A."/>
            <person name="Itakura S."/>
            <person name="Fukuzumi Y."/>
            <person name="Fujimori Y."/>
            <person name="Komiyama M."/>
            <person name="Tashiro H."/>
            <person name="Tanigami A."/>
            <person name="Fujiwara T."/>
            <person name="Ono T."/>
            <person name="Yamada K."/>
            <person name="Fujii Y."/>
            <person name="Ozaki K."/>
            <person name="Hirao M."/>
            <person name="Ohmori Y."/>
            <person name="Kawabata A."/>
            <person name="Hikiji T."/>
            <person name="Kobatake N."/>
            <person name="Inagaki H."/>
            <person name="Ikema Y."/>
            <person name="Okamoto S."/>
            <person name="Okitani R."/>
            <person name="Kawakami T."/>
            <person name="Noguchi S."/>
            <person name="Itoh T."/>
            <person name="Shigeta K."/>
            <person name="Senba T."/>
            <person name="Matsumura K."/>
            <person name="Nakajima Y."/>
            <person name="Mizuno T."/>
            <person name="Morinaga M."/>
            <person name="Sasaki M."/>
            <person name="Togashi T."/>
            <person name="Oyama M."/>
            <person name="Hata H."/>
            <person name="Watanabe M."/>
            <person name="Komatsu T."/>
            <person name="Mizushima-Sugano J."/>
            <person name="Satoh T."/>
            <person name="Shirai Y."/>
            <person name="Takahashi Y."/>
            <person name="Nakagawa K."/>
            <person name="Okumura K."/>
            <person name="Nagase T."/>
            <person name="Nomura N."/>
            <person name="Kikuchi H."/>
            <person name="Masuho Y."/>
            <person name="Yamashita R."/>
            <person name="Nakai K."/>
            <person name="Yada T."/>
            <person name="Nakamura Y."/>
            <person name="Ohara O."/>
            <person name="Isogai T."/>
            <person name="Sugano S."/>
        </authorList>
    </citation>
    <scope>NUCLEOTIDE SEQUENCE [LARGE SCALE MRNA]</scope>
    <scope>VARIANT 495-PRO--GLU-507 DEL</scope>
    <source>
        <tissue>Testis</tissue>
    </source>
</reference>
<reference key="2">
    <citation type="journal article" date="2005" name="Nature">
        <title>The DNA sequence of the human X chromosome.</title>
        <authorList>
            <person name="Ross M.T."/>
            <person name="Grafham D.V."/>
            <person name="Coffey A.J."/>
            <person name="Scherer S."/>
            <person name="McLay K."/>
            <person name="Muzny D."/>
            <person name="Platzer M."/>
            <person name="Howell G.R."/>
            <person name="Burrows C."/>
            <person name="Bird C.P."/>
            <person name="Frankish A."/>
            <person name="Lovell F.L."/>
            <person name="Howe K.L."/>
            <person name="Ashurst J.L."/>
            <person name="Fulton R.S."/>
            <person name="Sudbrak R."/>
            <person name="Wen G."/>
            <person name="Jones M.C."/>
            <person name="Hurles M.E."/>
            <person name="Andrews T.D."/>
            <person name="Scott C.E."/>
            <person name="Searle S."/>
            <person name="Ramser J."/>
            <person name="Whittaker A."/>
            <person name="Deadman R."/>
            <person name="Carter N.P."/>
            <person name="Hunt S.E."/>
            <person name="Chen R."/>
            <person name="Cree A."/>
            <person name="Gunaratne P."/>
            <person name="Havlak P."/>
            <person name="Hodgson A."/>
            <person name="Metzker M.L."/>
            <person name="Richards S."/>
            <person name="Scott G."/>
            <person name="Steffen D."/>
            <person name="Sodergren E."/>
            <person name="Wheeler D.A."/>
            <person name="Worley K.C."/>
            <person name="Ainscough R."/>
            <person name="Ambrose K.D."/>
            <person name="Ansari-Lari M.A."/>
            <person name="Aradhya S."/>
            <person name="Ashwell R.I."/>
            <person name="Babbage A.K."/>
            <person name="Bagguley C.L."/>
            <person name="Ballabio A."/>
            <person name="Banerjee R."/>
            <person name="Barker G.E."/>
            <person name="Barlow K.F."/>
            <person name="Barrett I.P."/>
            <person name="Bates K.N."/>
            <person name="Beare D.M."/>
            <person name="Beasley H."/>
            <person name="Beasley O."/>
            <person name="Beck A."/>
            <person name="Bethel G."/>
            <person name="Blechschmidt K."/>
            <person name="Brady N."/>
            <person name="Bray-Allen S."/>
            <person name="Bridgeman A.M."/>
            <person name="Brown A.J."/>
            <person name="Brown M.J."/>
            <person name="Bonnin D."/>
            <person name="Bruford E.A."/>
            <person name="Buhay C."/>
            <person name="Burch P."/>
            <person name="Burford D."/>
            <person name="Burgess J."/>
            <person name="Burrill W."/>
            <person name="Burton J."/>
            <person name="Bye J.M."/>
            <person name="Carder C."/>
            <person name="Carrel L."/>
            <person name="Chako J."/>
            <person name="Chapman J.C."/>
            <person name="Chavez D."/>
            <person name="Chen E."/>
            <person name="Chen G."/>
            <person name="Chen Y."/>
            <person name="Chen Z."/>
            <person name="Chinault C."/>
            <person name="Ciccodicola A."/>
            <person name="Clark S.Y."/>
            <person name="Clarke G."/>
            <person name="Clee C.M."/>
            <person name="Clegg S."/>
            <person name="Clerc-Blankenburg K."/>
            <person name="Clifford K."/>
            <person name="Cobley V."/>
            <person name="Cole C.G."/>
            <person name="Conquer J.S."/>
            <person name="Corby N."/>
            <person name="Connor R.E."/>
            <person name="David R."/>
            <person name="Davies J."/>
            <person name="Davis C."/>
            <person name="Davis J."/>
            <person name="Delgado O."/>
            <person name="Deshazo D."/>
            <person name="Dhami P."/>
            <person name="Ding Y."/>
            <person name="Dinh H."/>
            <person name="Dodsworth S."/>
            <person name="Draper H."/>
            <person name="Dugan-Rocha S."/>
            <person name="Dunham A."/>
            <person name="Dunn M."/>
            <person name="Durbin K.J."/>
            <person name="Dutta I."/>
            <person name="Eades T."/>
            <person name="Ellwood M."/>
            <person name="Emery-Cohen A."/>
            <person name="Errington H."/>
            <person name="Evans K.L."/>
            <person name="Faulkner L."/>
            <person name="Francis F."/>
            <person name="Frankland J."/>
            <person name="Fraser A.E."/>
            <person name="Galgoczy P."/>
            <person name="Gilbert J."/>
            <person name="Gill R."/>
            <person name="Gloeckner G."/>
            <person name="Gregory S.G."/>
            <person name="Gribble S."/>
            <person name="Griffiths C."/>
            <person name="Grocock R."/>
            <person name="Gu Y."/>
            <person name="Gwilliam R."/>
            <person name="Hamilton C."/>
            <person name="Hart E.A."/>
            <person name="Hawes A."/>
            <person name="Heath P.D."/>
            <person name="Heitmann K."/>
            <person name="Hennig S."/>
            <person name="Hernandez J."/>
            <person name="Hinzmann B."/>
            <person name="Ho S."/>
            <person name="Hoffs M."/>
            <person name="Howden P.J."/>
            <person name="Huckle E.J."/>
            <person name="Hume J."/>
            <person name="Hunt P.J."/>
            <person name="Hunt A.R."/>
            <person name="Isherwood J."/>
            <person name="Jacob L."/>
            <person name="Johnson D."/>
            <person name="Jones S."/>
            <person name="de Jong P.J."/>
            <person name="Joseph S.S."/>
            <person name="Keenan S."/>
            <person name="Kelly S."/>
            <person name="Kershaw J.K."/>
            <person name="Khan Z."/>
            <person name="Kioschis P."/>
            <person name="Klages S."/>
            <person name="Knights A.J."/>
            <person name="Kosiura A."/>
            <person name="Kovar-Smith C."/>
            <person name="Laird G.K."/>
            <person name="Langford C."/>
            <person name="Lawlor S."/>
            <person name="Leversha M."/>
            <person name="Lewis L."/>
            <person name="Liu W."/>
            <person name="Lloyd C."/>
            <person name="Lloyd D.M."/>
            <person name="Loulseged H."/>
            <person name="Loveland J.E."/>
            <person name="Lovell J.D."/>
            <person name="Lozado R."/>
            <person name="Lu J."/>
            <person name="Lyne R."/>
            <person name="Ma J."/>
            <person name="Maheshwari M."/>
            <person name="Matthews L.H."/>
            <person name="McDowall J."/>
            <person name="McLaren S."/>
            <person name="McMurray A."/>
            <person name="Meidl P."/>
            <person name="Meitinger T."/>
            <person name="Milne S."/>
            <person name="Miner G."/>
            <person name="Mistry S.L."/>
            <person name="Morgan M."/>
            <person name="Morris S."/>
            <person name="Mueller I."/>
            <person name="Mullikin J.C."/>
            <person name="Nguyen N."/>
            <person name="Nordsiek G."/>
            <person name="Nyakatura G."/>
            <person name="O'dell C.N."/>
            <person name="Okwuonu G."/>
            <person name="Palmer S."/>
            <person name="Pandian R."/>
            <person name="Parker D."/>
            <person name="Parrish J."/>
            <person name="Pasternak S."/>
            <person name="Patel D."/>
            <person name="Pearce A.V."/>
            <person name="Pearson D.M."/>
            <person name="Pelan S.E."/>
            <person name="Perez L."/>
            <person name="Porter K.M."/>
            <person name="Ramsey Y."/>
            <person name="Reichwald K."/>
            <person name="Rhodes S."/>
            <person name="Ridler K.A."/>
            <person name="Schlessinger D."/>
            <person name="Schueler M.G."/>
            <person name="Sehra H.K."/>
            <person name="Shaw-Smith C."/>
            <person name="Shen H."/>
            <person name="Sheridan E.M."/>
            <person name="Shownkeen R."/>
            <person name="Skuce C.D."/>
            <person name="Smith M.L."/>
            <person name="Sotheran E.C."/>
            <person name="Steingruber H.E."/>
            <person name="Steward C.A."/>
            <person name="Storey R."/>
            <person name="Swann R.M."/>
            <person name="Swarbreck D."/>
            <person name="Tabor P.E."/>
            <person name="Taudien S."/>
            <person name="Taylor T."/>
            <person name="Teague B."/>
            <person name="Thomas K."/>
            <person name="Thorpe A."/>
            <person name="Timms K."/>
            <person name="Tracey A."/>
            <person name="Trevanion S."/>
            <person name="Tromans A.C."/>
            <person name="d'Urso M."/>
            <person name="Verduzco D."/>
            <person name="Villasana D."/>
            <person name="Waldron L."/>
            <person name="Wall M."/>
            <person name="Wang Q."/>
            <person name="Warren J."/>
            <person name="Warry G.L."/>
            <person name="Wei X."/>
            <person name="West A."/>
            <person name="Whitehead S.L."/>
            <person name="Whiteley M.N."/>
            <person name="Wilkinson J.E."/>
            <person name="Willey D.L."/>
            <person name="Williams G."/>
            <person name="Williams L."/>
            <person name="Williamson A."/>
            <person name="Williamson H."/>
            <person name="Wilming L."/>
            <person name="Woodmansey R.L."/>
            <person name="Wray P.W."/>
            <person name="Yen J."/>
            <person name="Zhang J."/>
            <person name="Zhou J."/>
            <person name="Zoghbi H."/>
            <person name="Zorilla S."/>
            <person name="Buck D."/>
            <person name="Reinhardt R."/>
            <person name="Poustka A."/>
            <person name="Rosenthal A."/>
            <person name="Lehrach H."/>
            <person name="Meindl A."/>
            <person name="Minx P.J."/>
            <person name="Hillier L.W."/>
            <person name="Willard H.F."/>
            <person name="Wilson R.K."/>
            <person name="Waterston R.H."/>
            <person name="Rice C.M."/>
            <person name="Vaudin M."/>
            <person name="Coulson A."/>
            <person name="Nelson D.L."/>
            <person name="Weinstock G."/>
            <person name="Sulston J.E."/>
            <person name="Durbin R.M."/>
            <person name="Hubbard T."/>
            <person name="Gibbs R.A."/>
            <person name="Beck S."/>
            <person name="Rogers J."/>
            <person name="Bentley D.R."/>
        </authorList>
    </citation>
    <scope>NUCLEOTIDE SEQUENCE [LARGE SCALE GENOMIC DNA]</scope>
</reference>
<reference key="3">
    <citation type="journal article" date="2004" name="Genome Res.">
        <title>The status, quality, and expansion of the NIH full-length cDNA project: the Mammalian Gene Collection (MGC).</title>
        <authorList>
            <consortium name="The MGC Project Team"/>
        </authorList>
    </citation>
    <scope>NUCLEOTIDE SEQUENCE [LARGE SCALE MRNA]</scope>
    <scope>VARIANTS LEU-50; GLU-232 AND 495-PRO--GLU-507 DEL</scope>
    <source>
        <tissue>Testis</tissue>
    </source>
</reference>